<accession>Q0AEP6</accession>
<feature type="chain" id="PRO_1000019473" description="Oxygen-dependent coproporphyrinogen-III oxidase">
    <location>
        <begin position="1"/>
        <end position="301"/>
    </location>
</feature>
<feature type="region of interest" description="Important for dimerization" evidence="1">
    <location>
        <begin position="238"/>
        <end position="273"/>
    </location>
</feature>
<feature type="active site" description="Proton donor" evidence="1">
    <location>
        <position position="104"/>
    </location>
</feature>
<feature type="binding site" evidence="1">
    <location>
        <position position="90"/>
    </location>
    <ligand>
        <name>substrate</name>
    </ligand>
</feature>
<feature type="binding site" evidence="1">
    <location>
        <position position="94"/>
    </location>
    <ligand>
        <name>a divalent metal cation</name>
        <dbReference type="ChEBI" id="CHEBI:60240"/>
    </ligand>
</feature>
<feature type="binding site" evidence="1">
    <location>
        <position position="104"/>
    </location>
    <ligand>
        <name>a divalent metal cation</name>
        <dbReference type="ChEBI" id="CHEBI:60240"/>
    </ligand>
</feature>
<feature type="binding site" evidence="1">
    <location>
        <begin position="106"/>
        <end position="108"/>
    </location>
    <ligand>
        <name>substrate</name>
    </ligand>
</feature>
<feature type="binding site" evidence="1">
    <location>
        <position position="143"/>
    </location>
    <ligand>
        <name>a divalent metal cation</name>
        <dbReference type="ChEBI" id="CHEBI:60240"/>
    </ligand>
</feature>
<feature type="binding site" evidence="1">
    <location>
        <position position="173"/>
    </location>
    <ligand>
        <name>a divalent metal cation</name>
        <dbReference type="ChEBI" id="CHEBI:60240"/>
    </ligand>
</feature>
<feature type="binding site" evidence="1">
    <location>
        <begin position="256"/>
        <end position="258"/>
    </location>
    <ligand>
        <name>substrate</name>
    </ligand>
</feature>
<feature type="site" description="Important for dimerization" evidence="1">
    <location>
        <position position="173"/>
    </location>
</feature>
<reference key="1">
    <citation type="journal article" date="2007" name="Environ. Microbiol.">
        <title>Whole-genome analysis of the ammonia-oxidizing bacterium, Nitrosomonas eutropha C91: implications for niche adaptation.</title>
        <authorList>
            <person name="Stein L.Y."/>
            <person name="Arp D.J."/>
            <person name="Berube P.M."/>
            <person name="Chain P.S."/>
            <person name="Hauser L."/>
            <person name="Jetten M.S."/>
            <person name="Klotz M.G."/>
            <person name="Larimer F.W."/>
            <person name="Norton J.M."/>
            <person name="Op den Camp H.J.M."/>
            <person name="Shin M."/>
            <person name="Wei X."/>
        </authorList>
    </citation>
    <scope>NUCLEOTIDE SEQUENCE [LARGE SCALE GENOMIC DNA]</scope>
    <source>
        <strain>DSM 101675 / C91 / Nm57</strain>
    </source>
</reference>
<dbReference type="EC" id="1.3.3.3" evidence="1"/>
<dbReference type="EMBL" id="CP000450">
    <property type="protein sequence ID" value="ABI60186.1"/>
    <property type="molecule type" value="Genomic_DNA"/>
</dbReference>
<dbReference type="RefSeq" id="WP_011634987.1">
    <property type="nucleotide sequence ID" value="NC_008344.1"/>
</dbReference>
<dbReference type="SMR" id="Q0AEP6"/>
<dbReference type="STRING" id="335283.Neut_1956"/>
<dbReference type="KEGG" id="net:Neut_1956"/>
<dbReference type="eggNOG" id="COG0408">
    <property type="taxonomic scope" value="Bacteria"/>
</dbReference>
<dbReference type="HOGENOM" id="CLU_026169_0_1_4"/>
<dbReference type="OrthoDB" id="9777553at2"/>
<dbReference type="UniPathway" id="UPA00251">
    <property type="reaction ID" value="UER00322"/>
</dbReference>
<dbReference type="Proteomes" id="UP000001966">
    <property type="component" value="Chromosome"/>
</dbReference>
<dbReference type="GO" id="GO:0005737">
    <property type="term" value="C:cytoplasm"/>
    <property type="evidence" value="ECO:0007669"/>
    <property type="project" value="UniProtKB-SubCell"/>
</dbReference>
<dbReference type="GO" id="GO:0004109">
    <property type="term" value="F:coproporphyrinogen oxidase activity"/>
    <property type="evidence" value="ECO:0007669"/>
    <property type="project" value="UniProtKB-UniRule"/>
</dbReference>
<dbReference type="GO" id="GO:0046872">
    <property type="term" value="F:metal ion binding"/>
    <property type="evidence" value="ECO:0007669"/>
    <property type="project" value="UniProtKB-KW"/>
</dbReference>
<dbReference type="GO" id="GO:0042803">
    <property type="term" value="F:protein homodimerization activity"/>
    <property type="evidence" value="ECO:0000250"/>
    <property type="project" value="UniProtKB"/>
</dbReference>
<dbReference type="GO" id="GO:0006782">
    <property type="term" value="P:protoporphyrinogen IX biosynthetic process"/>
    <property type="evidence" value="ECO:0007669"/>
    <property type="project" value="UniProtKB-UniRule"/>
</dbReference>
<dbReference type="FunFam" id="3.40.1500.10:FF:000001">
    <property type="entry name" value="Oxygen-dependent coproporphyrinogen-III oxidase"/>
    <property type="match status" value="1"/>
</dbReference>
<dbReference type="Gene3D" id="3.40.1500.10">
    <property type="entry name" value="Coproporphyrinogen III oxidase, aerobic"/>
    <property type="match status" value="1"/>
</dbReference>
<dbReference type="HAMAP" id="MF_00333">
    <property type="entry name" value="Coprogen_oxidas"/>
    <property type="match status" value="1"/>
</dbReference>
<dbReference type="InterPro" id="IPR001260">
    <property type="entry name" value="Coprogen_oxidase_aer"/>
</dbReference>
<dbReference type="InterPro" id="IPR036406">
    <property type="entry name" value="Coprogen_oxidase_aer_sf"/>
</dbReference>
<dbReference type="InterPro" id="IPR018375">
    <property type="entry name" value="Coprogen_oxidase_CS"/>
</dbReference>
<dbReference type="NCBIfam" id="NF003727">
    <property type="entry name" value="PRK05330.1"/>
    <property type="match status" value="1"/>
</dbReference>
<dbReference type="PANTHER" id="PTHR10755">
    <property type="entry name" value="COPROPORPHYRINOGEN III OXIDASE, MITOCHONDRIAL"/>
    <property type="match status" value="1"/>
</dbReference>
<dbReference type="PANTHER" id="PTHR10755:SF0">
    <property type="entry name" value="OXYGEN-DEPENDENT COPROPORPHYRINOGEN-III OXIDASE, MITOCHONDRIAL"/>
    <property type="match status" value="1"/>
</dbReference>
<dbReference type="Pfam" id="PF01218">
    <property type="entry name" value="Coprogen_oxidas"/>
    <property type="match status" value="1"/>
</dbReference>
<dbReference type="PIRSF" id="PIRSF000166">
    <property type="entry name" value="Coproporphyri_ox"/>
    <property type="match status" value="1"/>
</dbReference>
<dbReference type="PRINTS" id="PR00073">
    <property type="entry name" value="COPRGNOXDASE"/>
</dbReference>
<dbReference type="SUPFAM" id="SSF102886">
    <property type="entry name" value="Coproporphyrinogen III oxidase"/>
    <property type="match status" value="1"/>
</dbReference>
<dbReference type="PROSITE" id="PS01021">
    <property type="entry name" value="COPROGEN_OXIDASE"/>
    <property type="match status" value="1"/>
</dbReference>
<keyword id="KW-0963">Cytoplasm</keyword>
<keyword id="KW-0350">Heme biosynthesis</keyword>
<keyword id="KW-0479">Metal-binding</keyword>
<keyword id="KW-0560">Oxidoreductase</keyword>
<keyword id="KW-0627">Porphyrin biosynthesis</keyword>
<name>HEM6_NITEC</name>
<protein>
    <recommendedName>
        <fullName evidence="1">Oxygen-dependent coproporphyrinogen-III oxidase</fullName>
        <shortName evidence="1">CPO</shortName>
        <shortName evidence="1">Coprogen oxidase</shortName>
        <shortName evidence="1">Coproporphyrinogenase</shortName>
        <ecNumber evidence="1">1.3.3.3</ecNumber>
    </recommendedName>
</protein>
<organism>
    <name type="scientific">Nitrosomonas eutropha (strain DSM 101675 / C91 / Nm57)</name>
    <dbReference type="NCBI Taxonomy" id="335283"/>
    <lineage>
        <taxon>Bacteria</taxon>
        <taxon>Pseudomonadati</taxon>
        <taxon>Pseudomonadota</taxon>
        <taxon>Betaproteobacteria</taxon>
        <taxon>Nitrosomonadales</taxon>
        <taxon>Nitrosomonadaceae</taxon>
        <taxon>Nitrosomonas</taxon>
    </lineage>
</organism>
<gene>
    <name evidence="1" type="primary">hemF</name>
    <name type="ordered locus">Neut_1956</name>
</gene>
<comment type="function">
    <text evidence="1">Involved in the heme biosynthesis. Catalyzes the aerobic oxidative decarboxylation of propionate groups of rings A and B of coproporphyrinogen-III to yield the vinyl groups in protoporphyrinogen-IX.</text>
</comment>
<comment type="catalytic activity">
    <reaction evidence="1">
        <text>coproporphyrinogen III + O2 + 2 H(+) = protoporphyrinogen IX + 2 CO2 + 2 H2O</text>
        <dbReference type="Rhea" id="RHEA:18257"/>
        <dbReference type="ChEBI" id="CHEBI:15377"/>
        <dbReference type="ChEBI" id="CHEBI:15378"/>
        <dbReference type="ChEBI" id="CHEBI:15379"/>
        <dbReference type="ChEBI" id="CHEBI:16526"/>
        <dbReference type="ChEBI" id="CHEBI:57307"/>
        <dbReference type="ChEBI" id="CHEBI:57309"/>
        <dbReference type="EC" id="1.3.3.3"/>
    </reaction>
</comment>
<comment type="cofactor">
    <cofactor evidence="1">
        <name>a divalent metal cation</name>
        <dbReference type="ChEBI" id="CHEBI:60240"/>
    </cofactor>
</comment>
<comment type="pathway">
    <text evidence="1">Porphyrin-containing compound metabolism; protoporphyrin-IX biosynthesis; protoporphyrinogen-IX from coproporphyrinogen-III (O2 route): step 1/1.</text>
</comment>
<comment type="subunit">
    <text evidence="1">Homodimer.</text>
</comment>
<comment type="subcellular location">
    <subcellularLocation>
        <location evidence="1">Cytoplasm</location>
    </subcellularLocation>
</comment>
<comment type="similarity">
    <text evidence="1">Belongs to the aerobic coproporphyrinogen-III oxidase family.</text>
</comment>
<sequence>MDFAQVKDYLVNLQNNIVAGLEQADGGSFRRDSWDRPEGGGGTSCVIEEGNVLERGGVNFSHVHGKGLPASATAARPELAGRAFEAAGVSLVLHPRNPYAPTVHMNVRFFAAIKEGAEPVWWFGGGMDLTPYYGFEEDAIHFHQICKHALQPSGSEYYPRFKKWCDEYFYLKHRKEPRGIGGVFFDDLNQPDFVTCFNLTKSVGDQFLAAYVPILQKRCNLPYGERERDFQAYRRGRYVEFNLVWDRGTLFGLQSGGRTESILMSLPPIVKWRYDWSPAAGSPEAKLYTDFLIGKDWLPLD</sequence>
<evidence type="ECO:0000255" key="1">
    <source>
        <dbReference type="HAMAP-Rule" id="MF_00333"/>
    </source>
</evidence>
<proteinExistence type="inferred from homology"/>